<keyword id="KW-0687">Ribonucleoprotein</keyword>
<keyword id="KW-0689">Ribosomal protein</keyword>
<gene>
    <name evidence="1" type="primary">rpmF</name>
    <name type="ordered locus">ECP_1081</name>
</gene>
<accession>Q0TIY5</accession>
<dbReference type="EMBL" id="CP000247">
    <property type="protein sequence ID" value="ABG69094.1"/>
    <property type="molecule type" value="Genomic_DNA"/>
</dbReference>
<dbReference type="RefSeq" id="WP_000290727.1">
    <property type="nucleotide sequence ID" value="NC_008253.1"/>
</dbReference>
<dbReference type="SMR" id="Q0TIY5"/>
<dbReference type="GeneID" id="93776319"/>
<dbReference type="KEGG" id="ecp:ECP_1081"/>
<dbReference type="HOGENOM" id="CLU_129084_2_1_6"/>
<dbReference type="Proteomes" id="UP000009182">
    <property type="component" value="Chromosome"/>
</dbReference>
<dbReference type="GO" id="GO:0015934">
    <property type="term" value="C:large ribosomal subunit"/>
    <property type="evidence" value="ECO:0007669"/>
    <property type="project" value="InterPro"/>
</dbReference>
<dbReference type="GO" id="GO:0003735">
    <property type="term" value="F:structural constituent of ribosome"/>
    <property type="evidence" value="ECO:0007669"/>
    <property type="project" value="InterPro"/>
</dbReference>
<dbReference type="GO" id="GO:0006412">
    <property type="term" value="P:translation"/>
    <property type="evidence" value="ECO:0007669"/>
    <property type="project" value="UniProtKB-UniRule"/>
</dbReference>
<dbReference type="HAMAP" id="MF_00340">
    <property type="entry name" value="Ribosomal_bL32"/>
    <property type="match status" value="1"/>
</dbReference>
<dbReference type="InterPro" id="IPR002677">
    <property type="entry name" value="Ribosomal_bL32"/>
</dbReference>
<dbReference type="InterPro" id="IPR044957">
    <property type="entry name" value="Ribosomal_bL32_bact"/>
</dbReference>
<dbReference type="InterPro" id="IPR011332">
    <property type="entry name" value="Ribosomal_zn-bd"/>
</dbReference>
<dbReference type="NCBIfam" id="TIGR01031">
    <property type="entry name" value="rpmF_bact"/>
    <property type="match status" value="1"/>
</dbReference>
<dbReference type="PANTHER" id="PTHR35534">
    <property type="entry name" value="50S RIBOSOMAL PROTEIN L32"/>
    <property type="match status" value="1"/>
</dbReference>
<dbReference type="PANTHER" id="PTHR35534:SF1">
    <property type="entry name" value="LARGE RIBOSOMAL SUBUNIT PROTEIN BL32"/>
    <property type="match status" value="1"/>
</dbReference>
<dbReference type="Pfam" id="PF01783">
    <property type="entry name" value="Ribosomal_L32p"/>
    <property type="match status" value="1"/>
</dbReference>
<dbReference type="SUPFAM" id="SSF57829">
    <property type="entry name" value="Zn-binding ribosomal proteins"/>
    <property type="match status" value="1"/>
</dbReference>
<protein>
    <recommendedName>
        <fullName evidence="1">Large ribosomal subunit protein bL32</fullName>
    </recommendedName>
    <alternativeName>
        <fullName evidence="3">50S ribosomal protein L32</fullName>
    </alternativeName>
</protein>
<feature type="chain" id="PRO_0000296463" description="Large ribosomal subunit protein bL32">
    <location>
        <begin position="1"/>
        <end position="57"/>
    </location>
</feature>
<feature type="region of interest" description="Disordered" evidence="2">
    <location>
        <begin position="1"/>
        <end position="38"/>
    </location>
</feature>
<evidence type="ECO:0000255" key="1">
    <source>
        <dbReference type="HAMAP-Rule" id="MF_00340"/>
    </source>
</evidence>
<evidence type="ECO:0000256" key="2">
    <source>
        <dbReference type="SAM" id="MobiDB-lite"/>
    </source>
</evidence>
<evidence type="ECO:0000305" key="3"/>
<comment type="similarity">
    <text evidence="1">Belongs to the bacterial ribosomal protein bL32 family.</text>
</comment>
<name>RL32_ECOL5</name>
<reference key="1">
    <citation type="journal article" date="2006" name="Mol. Microbiol.">
        <title>Role of pathogenicity island-associated integrases in the genome plasticity of uropathogenic Escherichia coli strain 536.</title>
        <authorList>
            <person name="Hochhut B."/>
            <person name="Wilde C."/>
            <person name="Balling G."/>
            <person name="Middendorf B."/>
            <person name="Dobrindt U."/>
            <person name="Brzuszkiewicz E."/>
            <person name="Gottschalk G."/>
            <person name="Carniel E."/>
            <person name="Hacker J."/>
        </authorList>
    </citation>
    <scope>NUCLEOTIDE SEQUENCE [LARGE SCALE GENOMIC DNA]</scope>
    <source>
        <strain>536 / UPEC</strain>
    </source>
</reference>
<organism>
    <name type="scientific">Escherichia coli O6:K15:H31 (strain 536 / UPEC)</name>
    <dbReference type="NCBI Taxonomy" id="362663"/>
    <lineage>
        <taxon>Bacteria</taxon>
        <taxon>Pseudomonadati</taxon>
        <taxon>Pseudomonadota</taxon>
        <taxon>Gammaproteobacteria</taxon>
        <taxon>Enterobacterales</taxon>
        <taxon>Enterobacteriaceae</taxon>
        <taxon>Escherichia</taxon>
    </lineage>
</organism>
<proteinExistence type="inferred from homology"/>
<sequence>MAVQQNKPTRSKRGMRRSHDALTAVTSLSVDKTSGEKHLRHHITADGYYRGRKVIAK</sequence>